<protein>
    <recommendedName>
        <fullName evidence="1">tRNA (guanine-N(7)-)-methyltransferase non-catalytic subunit trm82</fullName>
    </recommendedName>
    <alternativeName>
        <fullName evidence="1">Transfer RNA methyltransferase 82</fullName>
    </alternativeName>
</protein>
<gene>
    <name type="primary">trm82</name>
    <name type="ORF">AFUA_1G05070</name>
</gene>
<name>TRM82_ASPFU</name>
<evidence type="ECO:0000255" key="1">
    <source>
        <dbReference type="HAMAP-Rule" id="MF_03056"/>
    </source>
</evidence>
<evidence type="ECO:0000256" key="2">
    <source>
        <dbReference type="SAM" id="MobiDB-lite"/>
    </source>
</evidence>
<sequence length="502" mass="54914">MVVNYQHPIQCIRYVEKQTAGFRNLFLASAGSKIYTYAAETGRKLAIWPEAPNASHSTVVSVAPSSEGDEPSAKKRKVSPVPEQTAKGGQPEASTAWSTIPILTVSSDGNFLVAVTGEDKCLRVFEIEESGHLKQLSERHMPKRPSAITLVDDDKTILCGDKFGDVYSLPLIDTGKSSIAPKIHAKMKPNQPAATTLTVHSKRNLASLEQQLRHYSQNEKTAEEKPTSAFELHLILGHVSMLTDLVYVSVPVDATSGRQRPYIFTADRDEHIRVSRGPPQAHIIENYCLGHTSFVSSLCVPQWAPEYLVSGGGDNHLIVWRWNESRLVQKVPLLEEGTDSEVVVRRIWALSLTKAANSQENANVILVALDGSSKLLCFTLESDGSLKAQNSIQASGNVLDLTVPSENSSIVVSVDAVREAGSTQEWRTSPSSPSTLVEAFRLKPASEGPLDWERTSEAITAQINSEGTSDISADLDEKQKKELNDSLYSLGNLRKKNMGEDD</sequence>
<dbReference type="EMBL" id="AAHF01000007">
    <property type="protein sequence ID" value="EAL88218.1"/>
    <property type="molecule type" value="Genomic_DNA"/>
</dbReference>
<dbReference type="RefSeq" id="XP_750256.1">
    <property type="nucleotide sequence ID" value="XM_745163.1"/>
</dbReference>
<dbReference type="SMR" id="Q4WJR4"/>
<dbReference type="STRING" id="330879.Q4WJR4"/>
<dbReference type="EnsemblFungi" id="EAL88218">
    <property type="protein sequence ID" value="EAL88218"/>
    <property type="gene ID" value="AFUA_1G05070"/>
</dbReference>
<dbReference type="GeneID" id="3507467"/>
<dbReference type="KEGG" id="afm:AFUA_1G05070"/>
<dbReference type="VEuPathDB" id="FungiDB:Afu1g05070"/>
<dbReference type="eggNOG" id="KOG3914">
    <property type="taxonomic scope" value="Eukaryota"/>
</dbReference>
<dbReference type="HOGENOM" id="CLU_022082_0_0_1"/>
<dbReference type="InParanoid" id="Q4WJR4"/>
<dbReference type="OMA" id="SERCMPK"/>
<dbReference type="OrthoDB" id="339900at2759"/>
<dbReference type="UniPathway" id="UPA00989"/>
<dbReference type="Proteomes" id="UP000002530">
    <property type="component" value="Chromosome 1"/>
</dbReference>
<dbReference type="GO" id="GO:0005829">
    <property type="term" value="C:cytosol"/>
    <property type="evidence" value="ECO:0000318"/>
    <property type="project" value="GO_Central"/>
</dbReference>
<dbReference type="GO" id="GO:0005634">
    <property type="term" value="C:nucleus"/>
    <property type="evidence" value="ECO:0000318"/>
    <property type="project" value="GO_Central"/>
</dbReference>
<dbReference type="GO" id="GO:0043527">
    <property type="term" value="C:tRNA methyltransferase complex"/>
    <property type="evidence" value="ECO:0000318"/>
    <property type="project" value="GO_Central"/>
</dbReference>
<dbReference type="GO" id="GO:0106004">
    <property type="term" value="P:tRNA (guanine-N7)-methylation"/>
    <property type="evidence" value="ECO:0007669"/>
    <property type="project" value="UniProtKB-UniRule"/>
</dbReference>
<dbReference type="GO" id="GO:0006400">
    <property type="term" value="P:tRNA modification"/>
    <property type="evidence" value="ECO:0000318"/>
    <property type="project" value="GO_Central"/>
</dbReference>
<dbReference type="Gene3D" id="2.130.10.10">
    <property type="entry name" value="YVTN repeat-like/Quinoprotein amine dehydrogenase"/>
    <property type="match status" value="1"/>
</dbReference>
<dbReference type="HAMAP" id="MF_03056">
    <property type="entry name" value="TRM82"/>
    <property type="match status" value="1"/>
</dbReference>
<dbReference type="InterPro" id="IPR028884">
    <property type="entry name" value="Trm82"/>
</dbReference>
<dbReference type="InterPro" id="IPR015943">
    <property type="entry name" value="WD40/YVTN_repeat-like_dom_sf"/>
</dbReference>
<dbReference type="InterPro" id="IPR036322">
    <property type="entry name" value="WD40_repeat_dom_sf"/>
</dbReference>
<dbReference type="InterPro" id="IPR001680">
    <property type="entry name" value="WD40_rpt"/>
</dbReference>
<dbReference type="PANTHER" id="PTHR16288:SF0">
    <property type="entry name" value="TRNA (GUANINE-N(7)-)-METHYLTRANSFERASE NON-CATALYTIC SUBUNIT WDR4"/>
    <property type="match status" value="1"/>
</dbReference>
<dbReference type="PANTHER" id="PTHR16288">
    <property type="entry name" value="WD40 REPEAT PROTEIN 4"/>
    <property type="match status" value="1"/>
</dbReference>
<dbReference type="SMART" id="SM00320">
    <property type="entry name" value="WD40"/>
    <property type="match status" value="2"/>
</dbReference>
<dbReference type="SUPFAM" id="SSF50978">
    <property type="entry name" value="WD40 repeat-like"/>
    <property type="match status" value="1"/>
</dbReference>
<accession>Q4WJR4</accession>
<comment type="function">
    <text evidence="1">Required for the formation of N(7)-methylguanine at position 46 (m7G46) in tRNA. In the complex, it is required to stabilize and induce conformational changes of the catalytic subunit.</text>
</comment>
<comment type="pathway">
    <text evidence="1">tRNA modification; N(7)-methylguanine-tRNA biosynthesis.</text>
</comment>
<comment type="subunit">
    <text evidence="1">Forms a heterodimer with the catalytic subunit trm8.</text>
</comment>
<comment type="subcellular location">
    <subcellularLocation>
        <location evidence="1">Nucleus</location>
    </subcellularLocation>
</comment>
<comment type="similarity">
    <text evidence="1">Belongs to the WD repeat TRM82 family.</text>
</comment>
<organism>
    <name type="scientific">Aspergillus fumigatus (strain ATCC MYA-4609 / CBS 101355 / FGSC A1100 / Af293)</name>
    <name type="common">Neosartorya fumigata</name>
    <dbReference type="NCBI Taxonomy" id="330879"/>
    <lineage>
        <taxon>Eukaryota</taxon>
        <taxon>Fungi</taxon>
        <taxon>Dikarya</taxon>
        <taxon>Ascomycota</taxon>
        <taxon>Pezizomycotina</taxon>
        <taxon>Eurotiomycetes</taxon>
        <taxon>Eurotiomycetidae</taxon>
        <taxon>Eurotiales</taxon>
        <taxon>Aspergillaceae</taxon>
        <taxon>Aspergillus</taxon>
        <taxon>Aspergillus subgen. Fumigati</taxon>
    </lineage>
</organism>
<proteinExistence type="inferred from homology"/>
<reference key="1">
    <citation type="journal article" date="2005" name="Nature">
        <title>Genomic sequence of the pathogenic and allergenic filamentous fungus Aspergillus fumigatus.</title>
        <authorList>
            <person name="Nierman W.C."/>
            <person name="Pain A."/>
            <person name="Anderson M.J."/>
            <person name="Wortman J.R."/>
            <person name="Kim H.S."/>
            <person name="Arroyo J."/>
            <person name="Berriman M."/>
            <person name="Abe K."/>
            <person name="Archer D.B."/>
            <person name="Bermejo C."/>
            <person name="Bennett J.W."/>
            <person name="Bowyer P."/>
            <person name="Chen D."/>
            <person name="Collins M."/>
            <person name="Coulsen R."/>
            <person name="Davies R."/>
            <person name="Dyer P.S."/>
            <person name="Farman M.L."/>
            <person name="Fedorova N."/>
            <person name="Fedorova N.D."/>
            <person name="Feldblyum T.V."/>
            <person name="Fischer R."/>
            <person name="Fosker N."/>
            <person name="Fraser A."/>
            <person name="Garcia J.L."/>
            <person name="Garcia M.J."/>
            <person name="Goble A."/>
            <person name="Goldman G.H."/>
            <person name="Gomi K."/>
            <person name="Griffith-Jones S."/>
            <person name="Gwilliam R."/>
            <person name="Haas B.J."/>
            <person name="Haas H."/>
            <person name="Harris D.E."/>
            <person name="Horiuchi H."/>
            <person name="Huang J."/>
            <person name="Humphray S."/>
            <person name="Jimenez J."/>
            <person name="Keller N."/>
            <person name="Khouri H."/>
            <person name="Kitamoto K."/>
            <person name="Kobayashi T."/>
            <person name="Konzack S."/>
            <person name="Kulkarni R."/>
            <person name="Kumagai T."/>
            <person name="Lafton A."/>
            <person name="Latge J.-P."/>
            <person name="Li W."/>
            <person name="Lord A."/>
            <person name="Lu C."/>
            <person name="Majoros W.H."/>
            <person name="May G.S."/>
            <person name="Miller B.L."/>
            <person name="Mohamoud Y."/>
            <person name="Molina M."/>
            <person name="Monod M."/>
            <person name="Mouyna I."/>
            <person name="Mulligan S."/>
            <person name="Murphy L.D."/>
            <person name="O'Neil S."/>
            <person name="Paulsen I."/>
            <person name="Penalva M.A."/>
            <person name="Pertea M."/>
            <person name="Price C."/>
            <person name="Pritchard B.L."/>
            <person name="Quail M.A."/>
            <person name="Rabbinowitsch E."/>
            <person name="Rawlins N."/>
            <person name="Rajandream M.A."/>
            <person name="Reichard U."/>
            <person name="Renauld H."/>
            <person name="Robson G.D."/>
            <person name="Rodriguez de Cordoba S."/>
            <person name="Rodriguez-Pena J.M."/>
            <person name="Ronning C.M."/>
            <person name="Rutter S."/>
            <person name="Salzberg S.L."/>
            <person name="Sanchez M."/>
            <person name="Sanchez-Ferrero J.C."/>
            <person name="Saunders D."/>
            <person name="Seeger K."/>
            <person name="Squares R."/>
            <person name="Squares S."/>
            <person name="Takeuchi M."/>
            <person name="Tekaia F."/>
            <person name="Turner G."/>
            <person name="Vazquez de Aldana C.R."/>
            <person name="Weidman J."/>
            <person name="White O."/>
            <person name="Woodward J.R."/>
            <person name="Yu J.-H."/>
            <person name="Fraser C.M."/>
            <person name="Galagan J.E."/>
            <person name="Asai K."/>
            <person name="Machida M."/>
            <person name="Hall N."/>
            <person name="Barrell B.G."/>
            <person name="Denning D.W."/>
        </authorList>
    </citation>
    <scope>NUCLEOTIDE SEQUENCE [LARGE SCALE GENOMIC DNA]</scope>
    <source>
        <strain>ATCC MYA-4609 / CBS 101355 / FGSC A1100 / Af293</strain>
    </source>
</reference>
<keyword id="KW-0539">Nucleus</keyword>
<keyword id="KW-1185">Reference proteome</keyword>
<keyword id="KW-0677">Repeat</keyword>
<keyword id="KW-0819">tRNA processing</keyword>
<keyword id="KW-0853">WD repeat</keyword>
<feature type="chain" id="PRO_0000370514" description="tRNA (guanine-N(7)-)-methyltransferase non-catalytic subunit trm82">
    <location>
        <begin position="1"/>
        <end position="502"/>
    </location>
</feature>
<feature type="repeat" description="WD 1">
    <location>
        <begin position="4"/>
        <end position="58"/>
    </location>
</feature>
<feature type="repeat" description="WD 2">
    <location>
        <begin position="95"/>
        <end position="135"/>
    </location>
</feature>
<feature type="repeat" description="WD 3">
    <location>
        <begin position="290"/>
        <end position="330"/>
    </location>
</feature>
<feature type="region of interest" description="Disordered" evidence="2">
    <location>
        <begin position="58"/>
        <end position="93"/>
    </location>
</feature>